<gene>
    <name evidence="1" type="primary">mnmE</name>
    <name evidence="1" type="synonym">trmE</name>
    <name type="ordered locus">KPK_5564</name>
</gene>
<evidence type="ECO:0000255" key="1">
    <source>
        <dbReference type="HAMAP-Rule" id="MF_00379"/>
    </source>
</evidence>
<reference key="1">
    <citation type="journal article" date="2008" name="PLoS Genet.">
        <title>Complete genome sequence of the N2-fixing broad host range endophyte Klebsiella pneumoniae 342 and virulence predictions verified in mice.</title>
        <authorList>
            <person name="Fouts D.E."/>
            <person name="Tyler H.L."/>
            <person name="DeBoy R.T."/>
            <person name="Daugherty S."/>
            <person name="Ren Q."/>
            <person name="Badger J.H."/>
            <person name="Durkin A.S."/>
            <person name="Huot H."/>
            <person name="Shrivastava S."/>
            <person name="Kothari S."/>
            <person name="Dodson R.J."/>
            <person name="Mohamoud Y."/>
            <person name="Khouri H."/>
            <person name="Roesch L.F.W."/>
            <person name="Krogfelt K.A."/>
            <person name="Struve C."/>
            <person name="Triplett E.W."/>
            <person name="Methe B.A."/>
        </authorList>
    </citation>
    <scope>NUCLEOTIDE SEQUENCE [LARGE SCALE GENOMIC DNA]</scope>
    <source>
        <strain>342</strain>
    </source>
</reference>
<comment type="function">
    <text evidence="1">Exhibits a very high intrinsic GTPase hydrolysis rate. Involved in the addition of a carboxymethylaminomethyl (cmnm) group at the wobble position (U34) of certain tRNAs, forming tRNA-cmnm(5)s(2)U34.</text>
</comment>
<comment type="cofactor">
    <cofactor evidence="1">
        <name>K(+)</name>
        <dbReference type="ChEBI" id="CHEBI:29103"/>
    </cofactor>
    <text evidence="1">Binds 1 potassium ion per subunit.</text>
</comment>
<comment type="subunit">
    <text evidence="1">Homodimer. Heterotetramer of two MnmE and two MnmG subunits.</text>
</comment>
<comment type="subcellular location">
    <subcellularLocation>
        <location evidence="1">Cytoplasm</location>
    </subcellularLocation>
</comment>
<comment type="similarity">
    <text evidence="1">Belongs to the TRAFAC class TrmE-Era-EngA-EngB-Septin-like GTPase superfamily. TrmE GTPase family.</text>
</comment>
<protein>
    <recommendedName>
        <fullName evidence="1">tRNA modification GTPase MnmE</fullName>
        <ecNumber evidence="1">3.6.-.-</ecNumber>
    </recommendedName>
</protein>
<sequence length="454" mass="49032">MSHNDTIVAQATPPGRGGVGILRISGLKARDVAQAVLGKLPKPRYADYLPFNDVDGTPLDQGIALWFPGPNSFTGEDVLELQGHGGPVILDLLLKRILTLPGVRIARPGEFSERAFLNDKLDLAQAEAIADLIDASSEQAARSALNSLQGAFSARVNHLVEALTHLRIYVEAAIDFPDEEIDFLSDGKIEAQLNGVMADLDAVRAEARQGSLLREGMKVVIAGRPNAGKSSLLNALAGREAAIVTDIAGTTRDVLREHIHIDGMPLHIIDTAGLRDASDEVERIGIERAWQEIEQADRVLFMVDGTTTSAVDPAEIWPDFIERLPAKLPITVVRNKADVTGEALGLSEVNGHSLIRLSARTGEGVEVLRNHLKQSMGFDTSMEGGFLARRRHLQALEEAANHLQQGKAQLLGAWAGELLAEELRLAQQALSEITGEFTSDDLLGRIFSSFCIGK</sequence>
<name>MNME_KLEP3</name>
<feature type="chain" id="PRO_1000197055" description="tRNA modification GTPase MnmE">
    <location>
        <begin position="1"/>
        <end position="454"/>
    </location>
</feature>
<feature type="domain" description="TrmE-type G">
    <location>
        <begin position="216"/>
        <end position="377"/>
    </location>
</feature>
<feature type="binding site" evidence="1">
    <location>
        <position position="23"/>
    </location>
    <ligand>
        <name>(6S)-5-formyl-5,6,7,8-tetrahydrofolate</name>
        <dbReference type="ChEBI" id="CHEBI:57457"/>
    </ligand>
</feature>
<feature type="binding site" evidence="1">
    <location>
        <position position="80"/>
    </location>
    <ligand>
        <name>(6S)-5-formyl-5,6,7,8-tetrahydrofolate</name>
        <dbReference type="ChEBI" id="CHEBI:57457"/>
    </ligand>
</feature>
<feature type="binding site" evidence="1">
    <location>
        <position position="120"/>
    </location>
    <ligand>
        <name>(6S)-5-formyl-5,6,7,8-tetrahydrofolate</name>
        <dbReference type="ChEBI" id="CHEBI:57457"/>
    </ligand>
</feature>
<feature type="binding site" evidence="1">
    <location>
        <begin position="226"/>
        <end position="231"/>
    </location>
    <ligand>
        <name>GTP</name>
        <dbReference type="ChEBI" id="CHEBI:37565"/>
    </ligand>
</feature>
<feature type="binding site" evidence="1">
    <location>
        <position position="226"/>
    </location>
    <ligand>
        <name>K(+)</name>
        <dbReference type="ChEBI" id="CHEBI:29103"/>
    </ligand>
</feature>
<feature type="binding site" evidence="1">
    <location>
        <position position="230"/>
    </location>
    <ligand>
        <name>Mg(2+)</name>
        <dbReference type="ChEBI" id="CHEBI:18420"/>
    </ligand>
</feature>
<feature type="binding site" evidence="1">
    <location>
        <begin position="245"/>
        <end position="251"/>
    </location>
    <ligand>
        <name>GTP</name>
        <dbReference type="ChEBI" id="CHEBI:37565"/>
    </ligand>
</feature>
<feature type="binding site" evidence="1">
    <location>
        <position position="245"/>
    </location>
    <ligand>
        <name>K(+)</name>
        <dbReference type="ChEBI" id="CHEBI:29103"/>
    </ligand>
</feature>
<feature type="binding site" evidence="1">
    <location>
        <position position="247"/>
    </location>
    <ligand>
        <name>K(+)</name>
        <dbReference type="ChEBI" id="CHEBI:29103"/>
    </ligand>
</feature>
<feature type="binding site" evidence="1">
    <location>
        <position position="250"/>
    </location>
    <ligand>
        <name>K(+)</name>
        <dbReference type="ChEBI" id="CHEBI:29103"/>
    </ligand>
</feature>
<feature type="binding site" evidence="1">
    <location>
        <position position="251"/>
    </location>
    <ligand>
        <name>Mg(2+)</name>
        <dbReference type="ChEBI" id="CHEBI:18420"/>
    </ligand>
</feature>
<feature type="binding site" evidence="1">
    <location>
        <begin position="270"/>
        <end position="273"/>
    </location>
    <ligand>
        <name>GTP</name>
        <dbReference type="ChEBI" id="CHEBI:37565"/>
    </ligand>
</feature>
<feature type="binding site" evidence="1">
    <location>
        <begin position="335"/>
        <end position="338"/>
    </location>
    <ligand>
        <name>GTP</name>
        <dbReference type="ChEBI" id="CHEBI:37565"/>
    </ligand>
</feature>
<feature type="binding site" evidence="1">
    <location>
        <begin position="358"/>
        <end position="360"/>
    </location>
    <ligand>
        <name>GTP</name>
        <dbReference type="ChEBI" id="CHEBI:37565"/>
    </ligand>
</feature>
<feature type="binding site" evidence="1">
    <location>
        <position position="454"/>
    </location>
    <ligand>
        <name>(6S)-5-formyl-5,6,7,8-tetrahydrofolate</name>
        <dbReference type="ChEBI" id="CHEBI:57457"/>
    </ligand>
</feature>
<accession>B5XZP4</accession>
<organism>
    <name type="scientific">Klebsiella pneumoniae (strain 342)</name>
    <dbReference type="NCBI Taxonomy" id="507522"/>
    <lineage>
        <taxon>Bacteria</taxon>
        <taxon>Pseudomonadati</taxon>
        <taxon>Pseudomonadota</taxon>
        <taxon>Gammaproteobacteria</taxon>
        <taxon>Enterobacterales</taxon>
        <taxon>Enterobacteriaceae</taxon>
        <taxon>Klebsiella/Raoultella group</taxon>
        <taxon>Klebsiella</taxon>
        <taxon>Klebsiella pneumoniae complex</taxon>
    </lineage>
</organism>
<proteinExistence type="inferred from homology"/>
<dbReference type="EC" id="3.6.-.-" evidence="1"/>
<dbReference type="EMBL" id="CP000964">
    <property type="protein sequence ID" value="ACI08930.1"/>
    <property type="molecule type" value="Genomic_DNA"/>
</dbReference>
<dbReference type="SMR" id="B5XZP4"/>
<dbReference type="KEGG" id="kpe:KPK_5564"/>
<dbReference type="HOGENOM" id="CLU_019624_4_1_6"/>
<dbReference type="Proteomes" id="UP000001734">
    <property type="component" value="Chromosome"/>
</dbReference>
<dbReference type="GO" id="GO:0005829">
    <property type="term" value="C:cytosol"/>
    <property type="evidence" value="ECO:0007669"/>
    <property type="project" value="TreeGrafter"/>
</dbReference>
<dbReference type="GO" id="GO:0005525">
    <property type="term" value="F:GTP binding"/>
    <property type="evidence" value="ECO:0007669"/>
    <property type="project" value="UniProtKB-UniRule"/>
</dbReference>
<dbReference type="GO" id="GO:0003924">
    <property type="term" value="F:GTPase activity"/>
    <property type="evidence" value="ECO:0007669"/>
    <property type="project" value="UniProtKB-UniRule"/>
</dbReference>
<dbReference type="GO" id="GO:0046872">
    <property type="term" value="F:metal ion binding"/>
    <property type="evidence" value="ECO:0007669"/>
    <property type="project" value="UniProtKB-KW"/>
</dbReference>
<dbReference type="GO" id="GO:0030488">
    <property type="term" value="P:tRNA methylation"/>
    <property type="evidence" value="ECO:0007669"/>
    <property type="project" value="TreeGrafter"/>
</dbReference>
<dbReference type="GO" id="GO:0002098">
    <property type="term" value="P:tRNA wobble uridine modification"/>
    <property type="evidence" value="ECO:0007669"/>
    <property type="project" value="TreeGrafter"/>
</dbReference>
<dbReference type="CDD" id="cd04164">
    <property type="entry name" value="trmE"/>
    <property type="match status" value="1"/>
</dbReference>
<dbReference type="CDD" id="cd14858">
    <property type="entry name" value="TrmE_N"/>
    <property type="match status" value="1"/>
</dbReference>
<dbReference type="FunFam" id="3.30.1360.120:FF:000001">
    <property type="entry name" value="tRNA modification GTPase MnmE"/>
    <property type="match status" value="1"/>
</dbReference>
<dbReference type="FunFam" id="3.40.50.300:FF:000249">
    <property type="entry name" value="tRNA modification GTPase MnmE"/>
    <property type="match status" value="1"/>
</dbReference>
<dbReference type="Gene3D" id="3.40.50.300">
    <property type="entry name" value="P-loop containing nucleotide triphosphate hydrolases"/>
    <property type="match status" value="1"/>
</dbReference>
<dbReference type="Gene3D" id="3.30.1360.120">
    <property type="entry name" value="Probable tRNA modification gtpase trme, domain 1"/>
    <property type="match status" value="1"/>
</dbReference>
<dbReference type="Gene3D" id="1.20.120.430">
    <property type="entry name" value="tRNA modification GTPase MnmE domain 2"/>
    <property type="match status" value="1"/>
</dbReference>
<dbReference type="HAMAP" id="MF_00379">
    <property type="entry name" value="GTPase_MnmE"/>
    <property type="match status" value="1"/>
</dbReference>
<dbReference type="InterPro" id="IPR031168">
    <property type="entry name" value="G_TrmE"/>
</dbReference>
<dbReference type="InterPro" id="IPR006073">
    <property type="entry name" value="GTP-bd"/>
</dbReference>
<dbReference type="InterPro" id="IPR018948">
    <property type="entry name" value="GTP-bd_TrmE_N"/>
</dbReference>
<dbReference type="InterPro" id="IPR004520">
    <property type="entry name" value="GTPase_MnmE"/>
</dbReference>
<dbReference type="InterPro" id="IPR027368">
    <property type="entry name" value="MnmE_dom2"/>
</dbReference>
<dbReference type="InterPro" id="IPR025867">
    <property type="entry name" value="MnmE_helical"/>
</dbReference>
<dbReference type="InterPro" id="IPR027417">
    <property type="entry name" value="P-loop_NTPase"/>
</dbReference>
<dbReference type="InterPro" id="IPR005225">
    <property type="entry name" value="Small_GTP-bd"/>
</dbReference>
<dbReference type="InterPro" id="IPR027266">
    <property type="entry name" value="TrmE/GcvT_dom1"/>
</dbReference>
<dbReference type="NCBIfam" id="TIGR00450">
    <property type="entry name" value="mnmE_trmE_thdF"/>
    <property type="match status" value="1"/>
</dbReference>
<dbReference type="NCBIfam" id="NF003661">
    <property type="entry name" value="PRK05291.1-3"/>
    <property type="match status" value="1"/>
</dbReference>
<dbReference type="NCBIfam" id="TIGR00231">
    <property type="entry name" value="small_GTP"/>
    <property type="match status" value="1"/>
</dbReference>
<dbReference type="PANTHER" id="PTHR42714">
    <property type="entry name" value="TRNA MODIFICATION GTPASE GTPBP3"/>
    <property type="match status" value="1"/>
</dbReference>
<dbReference type="PANTHER" id="PTHR42714:SF2">
    <property type="entry name" value="TRNA MODIFICATION GTPASE GTPBP3, MITOCHONDRIAL"/>
    <property type="match status" value="1"/>
</dbReference>
<dbReference type="Pfam" id="PF01926">
    <property type="entry name" value="MMR_HSR1"/>
    <property type="match status" value="1"/>
</dbReference>
<dbReference type="Pfam" id="PF12631">
    <property type="entry name" value="MnmE_helical"/>
    <property type="match status" value="1"/>
</dbReference>
<dbReference type="Pfam" id="PF10396">
    <property type="entry name" value="TrmE_N"/>
    <property type="match status" value="1"/>
</dbReference>
<dbReference type="SUPFAM" id="SSF52540">
    <property type="entry name" value="P-loop containing nucleoside triphosphate hydrolases"/>
    <property type="match status" value="1"/>
</dbReference>
<dbReference type="SUPFAM" id="SSF116878">
    <property type="entry name" value="TrmE connector domain"/>
    <property type="match status" value="1"/>
</dbReference>
<dbReference type="PROSITE" id="PS51709">
    <property type="entry name" value="G_TRME"/>
    <property type="match status" value="1"/>
</dbReference>
<keyword id="KW-0963">Cytoplasm</keyword>
<keyword id="KW-0342">GTP-binding</keyword>
<keyword id="KW-0378">Hydrolase</keyword>
<keyword id="KW-0460">Magnesium</keyword>
<keyword id="KW-0479">Metal-binding</keyword>
<keyword id="KW-0547">Nucleotide-binding</keyword>
<keyword id="KW-0630">Potassium</keyword>
<keyword id="KW-0819">tRNA processing</keyword>